<keyword id="KW-0067">ATP-binding</keyword>
<keyword id="KW-0143">Chaperone</keyword>
<keyword id="KW-0963">Cytoplasm</keyword>
<keyword id="KW-0547">Nucleotide-binding</keyword>
<keyword id="KW-1185">Reference proteome</keyword>
<evidence type="ECO:0000255" key="1">
    <source>
        <dbReference type="HAMAP-Rule" id="MF_00249"/>
    </source>
</evidence>
<evidence type="ECO:0000256" key="2">
    <source>
        <dbReference type="SAM" id="MobiDB-lite"/>
    </source>
</evidence>
<feature type="chain" id="PRO_0000160525" description="ATP-dependent protease ATPase subunit HslU">
    <location>
        <begin position="1"/>
        <end position="443"/>
    </location>
</feature>
<feature type="region of interest" description="Disordered" evidence="2">
    <location>
        <begin position="142"/>
        <end position="162"/>
    </location>
</feature>
<feature type="binding site" evidence="1">
    <location>
        <position position="18"/>
    </location>
    <ligand>
        <name>ATP</name>
        <dbReference type="ChEBI" id="CHEBI:30616"/>
    </ligand>
</feature>
<feature type="binding site" evidence="1">
    <location>
        <begin position="60"/>
        <end position="65"/>
    </location>
    <ligand>
        <name>ATP</name>
        <dbReference type="ChEBI" id="CHEBI:30616"/>
    </ligand>
</feature>
<feature type="binding site" evidence="1">
    <location>
        <position position="256"/>
    </location>
    <ligand>
        <name>ATP</name>
        <dbReference type="ChEBI" id="CHEBI:30616"/>
    </ligand>
</feature>
<feature type="binding site" evidence="1">
    <location>
        <position position="321"/>
    </location>
    <ligand>
        <name>ATP</name>
        <dbReference type="ChEBI" id="CHEBI:30616"/>
    </ligand>
</feature>
<feature type="binding site" evidence="1">
    <location>
        <position position="393"/>
    </location>
    <ligand>
        <name>ATP</name>
        <dbReference type="ChEBI" id="CHEBI:30616"/>
    </ligand>
</feature>
<reference key="1">
    <citation type="journal article" date="2003" name="J. Bacteriol.">
        <title>Complete genome sequence of the ammonia-oxidizing bacterium and obligate chemolithoautotroph Nitrosomonas europaea.</title>
        <authorList>
            <person name="Chain P."/>
            <person name="Lamerdin J.E."/>
            <person name="Larimer F.W."/>
            <person name="Regala W."/>
            <person name="Lao V."/>
            <person name="Land M.L."/>
            <person name="Hauser L."/>
            <person name="Hooper A.B."/>
            <person name="Klotz M.G."/>
            <person name="Norton J."/>
            <person name="Sayavedra-Soto L.A."/>
            <person name="Arciero D.M."/>
            <person name="Hommes N.G."/>
            <person name="Whittaker M.M."/>
            <person name="Arp D.J."/>
        </authorList>
    </citation>
    <scope>NUCLEOTIDE SEQUENCE [LARGE SCALE GENOMIC DNA]</scope>
    <source>
        <strain>ATCC 19718 / CIP 103999 / KCTC 2705 / NBRC 14298</strain>
    </source>
</reference>
<organism>
    <name type="scientific">Nitrosomonas europaea (strain ATCC 19718 / CIP 103999 / KCTC 2705 / NBRC 14298)</name>
    <dbReference type="NCBI Taxonomy" id="228410"/>
    <lineage>
        <taxon>Bacteria</taxon>
        <taxon>Pseudomonadati</taxon>
        <taxon>Pseudomonadota</taxon>
        <taxon>Betaproteobacteria</taxon>
        <taxon>Nitrosomonadales</taxon>
        <taxon>Nitrosomonadaceae</taxon>
        <taxon>Nitrosomonas</taxon>
    </lineage>
</organism>
<protein>
    <recommendedName>
        <fullName evidence="1">ATP-dependent protease ATPase subunit HslU</fullName>
    </recommendedName>
    <alternativeName>
        <fullName evidence="1">Unfoldase HslU</fullName>
    </alternativeName>
</protein>
<comment type="function">
    <text evidence="1">ATPase subunit of a proteasome-like degradation complex; this subunit has chaperone activity. The binding of ATP and its subsequent hydrolysis by HslU are essential for unfolding of protein substrates subsequently hydrolyzed by HslV. HslU recognizes the N-terminal part of its protein substrates and unfolds these before they are guided to HslV for hydrolysis.</text>
</comment>
<comment type="subunit">
    <text evidence="1">A double ring-shaped homohexamer of HslV is capped on each side by a ring-shaped HslU homohexamer. The assembly of the HslU/HslV complex is dependent on binding of ATP.</text>
</comment>
<comment type="subcellular location">
    <subcellularLocation>
        <location evidence="1">Cytoplasm</location>
    </subcellularLocation>
</comment>
<comment type="similarity">
    <text evidence="1">Belongs to the ClpX chaperone family. HslU subfamily.</text>
</comment>
<gene>
    <name evidence="1" type="primary">hslU</name>
    <name type="ordered locus">NE2261</name>
</gene>
<name>HSLU_NITEU</name>
<dbReference type="EMBL" id="AL954747">
    <property type="protein sequence ID" value="CAD86173.1"/>
    <property type="molecule type" value="Genomic_DNA"/>
</dbReference>
<dbReference type="RefSeq" id="WP_011112752.1">
    <property type="nucleotide sequence ID" value="NC_004757.1"/>
</dbReference>
<dbReference type="SMR" id="Q82SP6"/>
<dbReference type="STRING" id="228410.NE2261"/>
<dbReference type="GeneID" id="87105397"/>
<dbReference type="KEGG" id="neu:NE2261"/>
<dbReference type="eggNOG" id="COG1220">
    <property type="taxonomic scope" value="Bacteria"/>
</dbReference>
<dbReference type="HOGENOM" id="CLU_033123_0_0_4"/>
<dbReference type="OrthoDB" id="9804062at2"/>
<dbReference type="PhylomeDB" id="Q82SP6"/>
<dbReference type="Proteomes" id="UP000001416">
    <property type="component" value="Chromosome"/>
</dbReference>
<dbReference type="GO" id="GO:0009376">
    <property type="term" value="C:HslUV protease complex"/>
    <property type="evidence" value="ECO:0007669"/>
    <property type="project" value="UniProtKB-UniRule"/>
</dbReference>
<dbReference type="GO" id="GO:0005524">
    <property type="term" value="F:ATP binding"/>
    <property type="evidence" value="ECO:0007669"/>
    <property type="project" value="UniProtKB-UniRule"/>
</dbReference>
<dbReference type="GO" id="GO:0016887">
    <property type="term" value="F:ATP hydrolysis activity"/>
    <property type="evidence" value="ECO:0007669"/>
    <property type="project" value="InterPro"/>
</dbReference>
<dbReference type="GO" id="GO:0008233">
    <property type="term" value="F:peptidase activity"/>
    <property type="evidence" value="ECO:0007669"/>
    <property type="project" value="InterPro"/>
</dbReference>
<dbReference type="GO" id="GO:0036402">
    <property type="term" value="F:proteasome-activating activity"/>
    <property type="evidence" value="ECO:0007669"/>
    <property type="project" value="UniProtKB-UniRule"/>
</dbReference>
<dbReference type="GO" id="GO:0043335">
    <property type="term" value="P:protein unfolding"/>
    <property type="evidence" value="ECO:0007669"/>
    <property type="project" value="UniProtKB-UniRule"/>
</dbReference>
<dbReference type="GO" id="GO:0051603">
    <property type="term" value="P:proteolysis involved in protein catabolic process"/>
    <property type="evidence" value="ECO:0007669"/>
    <property type="project" value="TreeGrafter"/>
</dbReference>
<dbReference type="CDD" id="cd19498">
    <property type="entry name" value="RecA-like_HslU"/>
    <property type="match status" value="1"/>
</dbReference>
<dbReference type="FunFam" id="1.10.8.10:FF:000028">
    <property type="entry name" value="ATP-dependent protease ATPase subunit HslU"/>
    <property type="match status" value="1"/>
</dbReference>
<dbReference type="FunFam" id="3.40.50.300:FF:000213">
    <property type="entry name" value="ATP-dependent protease ATPase subunit HslU"/>
    <property type="match status" value="1"/>
</dbReference>
<dbReference type="FunFam" id="3.40.50.300:FF:000220">
    <property type="entry name" value="ATP-dependent protease ATPase subunit HslU"/>
    <property type="match status" value="1"/>
</dbReference>
<dbReference type="Gene3D" id="1.10.8.60">
    <property type="match status" value="1"/>
</dbReference>
<dbReference type="Gene3D" id="1.10.8.10">
    <property type="entry name" value="DNA helicase RuvA subunit, C-terminal domain"/>
    <property type="match status" value="1"/>
</dbReference>
<dbReference type="Gene3D" id="3.40.50.300">
    <property type="entry name" value="P-loop containing nucleotide triphosphate hydrolases"/>
    <property type="match status" value="2"/>
</dbReference>
<dbReference type="HAMAP" id="MF_00249">
    <property type="entry name" value="HslU"/>
    <property type="match status" value="1"/>
</dbReference>
<dbReference type="InterPro" id="IPR003593">
    <property type="entry name" value="AAA+_ATPase"/>
</dbReference>
<dbReference type="InterPro" id="IPR050052">
    <property type="entry name" value="ATP-dep_Clp_protease_ClpX"/>
</dbReference>
<dbReference type="InterPro" id="IPR003959">
    <property type="entry name" value="ATPase_AAA_core"/>
</dbReference>
<dbReference type="InterPro" id="IPR019489">
    <property type="entry name" value="Clp_ATPase_C"/>
</dbReference>
<dbReference type="InterPro" id="IPR004491">
    <property type="entry name" value="HslU"/>
</dbReference>
<dbReference type="InterPro" id="IPR027417">
    <property type="entry name" value="P-loop_NTPase"/>
</dbReference>
<dbReference type="NCBIfam" id="TIGR00390">
    <property type="entry name" value="hslU"/>
    <property type="match status" value="1"/>
</dbReference>
<dbReference type="NCBIfam" id="NF003544">
    <property type="entry name" value="PRK05201.1"/>
    <property type="match status" value="1"/>
</dbReference>
<dbReference type="PANTHER" id="PTHR48102">
    <property type="entry name" value="ATP-DEPENDENT CLP PROTEASE ATP-BINDING SUBUNIT CLPX-LIKE, MITOCHONDRIAL-RELATED"/>
    <property type="match status" value="1"/>
</dbReference>
<dbReference type="PANTHER" id="PTHR48102:SF3">
    <property type="entry name" value="ATP-DEPENDENT PROTEASE ATPASE SUBUNIT HSLU"/>
    <property type="match status" value="1"/>
</dbReference>
<dbReference type="Pfam" id="PF00004">
    <property type="entry name" value="AAA"/>
    <property type="match status" value="1"/>
</dbReference>
<dbReference type="Pfam" id="PF07724">
    <property type="entry name" value="AAA_2"/>
    <property type="match status" value="1"/>
</dbReference>
<dbReference type="Pfam" id="PF10431">
    <property type="entry name" value="ClpB_D2-small"/>
    <property type="match status" value="1"/>
</dbReference>
<dbReference type="SMART" id="SM00382">
    <property type="entry name" value="AAA"/>
    <property type="match status" value="1"/>
</dbReference>
<dbReference type="SMART" id="SM01086">
    <property type="entry name" value="ClpB_D2-small"/>
    <property type="match status" value="1"/>
</dbReference>
<dbReference type="SUPFAM" id="SSF52540">
    <property type="entry name" value="P-loop containing nucleoside triphosphate hydrolases"/>
    <property type="match status" value="1"/>
</dbReference>
<sequence>MSYMTPQEIVHELDKHIIGQDTAKRAVAIALRNRWRRQQVDEPLRHEITPKNILMIGPTGVGKTEIARRLARLANAPFIKIEATKFTEVGYVGRDVDSIIRDLVESAIKQAREREIRKNQPLAEDRAEERILDALLPPARDLGFEASPSEESNATRQKFRKKLREGELDDKEIEIEVAMAQTSMEIFAPPGMEELTSQIQGMFQNMGSGKRKMRKLRIREARKLLTEEEAARLVNDEELKLGAVQNVEQNGIVFLDEIDKITSRSEVSGSDVSRQGVQRDLLPLVEGTTISTKYGMIRTDHILFIASGAFHLAKPSDLIPELQGRFPIRVELESLSAEDFKQILTNTDACLIRQYQALLKTEGIELNFSEDAIGRLAEIAFSVNERTENIGARRLHTVMEKLLEDISFNATRYGGSTHVIDAVYVDERLGKLSQSEDLARYVL</sequence>
<proteinExistence type="inferred from homology"/>
<accession>Q82SP6</accession>